<sequence>MLGINYKPCNEDFWQGRTDSEENFLAFRWHQWIKPINLNKDDLSPFTGKLGFAFIGFCCDEGIRRNKGRTGAAKGPETIREEMANLPCCFTDEVKLFDAGNILVENISLEEGQDLLSKAINKILSLNLFPIVLGGGHEVAFGNYLGVLSHLKTINSKPNIGIINFDAHLDIRPYTEGMGSSGTMFRQISDICKKEDLNYSYLCMGVQKHSNTLELFKTADKLGANYVFAKNITYGDNWIVFESLDDFMKAQDYIYVTVCSDVFSSAFAPGVSASQSLGLDPEIVVRFIKYILRSNKVISFDIAEVSPRFDQGHVTANLAAVVIFSVIDTIAKIYGLGL</sequence>
<protein>
    <recommendedName>
        <fullName evidence="1">Formimidoylglutamase</fullName>
        <ecNumber evidence="1">3.5.3.8</ecNumber>
    </recommendedName>
    <alternativeName>
        <fullName evidence="1">Formiminoglutamase</fullName>
    </alternativeName>
    <alternativeName>
        <fullName evidence="1">Formiminoglutamate hydrolase</fullName>
    </alternativeName>
</protein>
<name>HUTG_CLOTE</name>
<keyword id="KW-0369">Histidine metabolism</keyword>
<keyword id="KW-0378">Hydrolase</keyword>
<keyword id="KW-0464">Manganese</keyword>
<keyword id="KW-0479">Metal-binding</keyword>
<keyword id="KW-1185">Reference proteome</keyword>
<comment type="function">
    <text evidence="1">Catalyzes the conversion of N-formimidoyl-L-glutamate to L-glutamate and formamide.</text>
</comment>
<comment type="catalytic activity">
    <reaction evidence="1">
        <text>N-formimidoyl-L-glutamate + H2O = formamide + L-glutamate</text>
        <dbReference type="Rhea" id="RHEA:22492"/>
        <dbReference type="ChEBI" id="CHEBI:15377"/>
        <dbReference type="ChEBI" id="CHEBI:16397"/>
        <dbReference type="ChEBI" id="CHEBI:29985"/>
        <dbReference type="ChEBI" id="CHEBI:58928"/>
        <dbReference type="EC" id="3.5.3.8"/>
    </reaction>
</comment>
<comment type="cofactor">
    <cofactor evidence="1">
        <name>Mn(2+)</name>
        <dbReference type="ChEBI" id="CHEBI:29035"/>
    </cofactor>
    <text evidence="1">Binds 2 manganese ions per subunit.</text>
</comment>
<comment type="pathway">
    <text evidence="1">Amino-acid degradation; L-histidine degradation into L-glutamate; L-glutamate from N-formimidoyl-L-glutamate (hydrolase route): step 1/1.</text>
</comment>
<comment type="similarity">
    <text evidence="1">Belongs to the arginase family.</text>
</comment>
<accession>Q893K6</accession>
<reference key="1">
    <citation type="journal article" date="2003" name="Proc. Natl. Acad. Sci. U.S.A.">
        <title>The genome sequence of Clostridium tetani, the causative agent of tetanus disease.</title>
        <authorList>
            <person name="Brueggemann H."/>
            <person name="Baeumer S."/>
            <person name="Fricke W.F."/>
            <person name="Wiezer A."/>
            <person name="Liesegang H."/>
            <person name="Decker I."/>
            <person name="Herzberg C."/>
            <person name="Martinez-Arias R."/>
            <person name="Merkl R."/>
            <person name="Henne A."/>
            <person name="Gottschalk G."/>
        </authorList>
    </citation>
    <scope>NUCLEOTIDE SEQUENCE [LARGE SCALE GENOMIC DNA]</scope>
    <source>
        <strain>Massachusetts / E88</strain>
    </source>
</reference>
<organism>
    <name type="scientific">Clostridium tetani (strain Massachusetts / E88)</name>
    <dbReference type="NCBI Taxonomy" id="212717"/>
    <lineage>
        <taxon>Bacteria</taxon>
        <taxon>Bacillati</taxon>
        <taxon>Bacillota</taxon>
        <taxon>Clostridia</taxon>
        <taxon>Eubacteriales</taxon>
        <taxon>Clostridiaceae</taxon>
        <taxon>Clostridium</taxon>
    </lineage>
</organism>
<gene>
    <name evidence="1" type="primary">hutG</name>
    <name type="ordered locus">CTC_01812</name>
</gene>
<evidence type="ECO:0000255" key="1">
    <source>
        <dbReference type="HAMAP-Rule" id="MF_00737"/>
    </source>
</evidence>
<feature type="chain" id="PRO_0000173752" description="Formimidoylglutamase">
    <location>
        <begin position="1"/>
        <end position="338"/>
    </location>
</feature>
<feature type="binding site" evidence="1">
    <location>
        <position position="137"/>
    </location>
    <ligand>
        <name>Mn(2+)</name>
        <dbReference type="ChEBI" id="CHEBI:29035"/>
        <label>1</label>
    </ligand>
</feature>
<feature type="binding site" evidence="1">
    <location>
        <position position="166"/>
    </location>
    <ligand>
        <name>Mn(2+)</name>
        <dbReference type="ChEBI" id="CHEBI:29035"/>
        <label>1</label>
    </ligand>
</feature>
<feature type="binding site" evidence="1">
    <location>
        <position position="166"/>
    </location>
    <ligand>
        <name>Mn(2+)</name>
        <dbReference type="ChEBI" id="CHEBI:29035"/>
        <label>2</label>
    </ligand>
</feature>
<feature type="binding site" evidence="1">
    <location>
        <position position="168"/>
    </location>
    <ligand>
        <name>Mn(2+)</name>
        <dbReference type="ChEBI" id="CHEBI:29035"/>
        <label>2</label>
    </ligand>
</feature>
<feature type="binding site" evidence="1">
    <location>
        <position position="170"/>
    </location>
    <ligand>
        <name>Mn(2+)</name>
        <dbReference type="ChEBI" id="CHEBI:29035"/>
        <label>1</label>
    </ligand>
</feature>
<feature type="binding site" evidence="1">
    <location>
        <position position="259"/>
    </location>
    <ligand>
        <name>Mn(2+)</name>
        <dbReference type="ChEBI" id="CHEBI:29035"/>
        <label>1</label>
    </ligand>
</feature>
<feature type="binding site" evidence="1">
    <location>
        <position position="259"/>
    </location>
    <ligand>
        <name>Mn(2+)</name>
        <dbReference type="ChEBI" id="CHEBI:29035"/>
        <label>2</label>
    </ligand>
</feature>
<feature type="binding site" evidence="1">
    <location>
        <position position="261"/>
    </location>
    <ligand>
        <name>Mn(2+)</name>
        <dbReference type="ChEBI" id="CHEBI:29035"/>
        <label>2</label>
    </ligand>
</feature>
<dbReference type="EC" id="3.5.3.8" evidence="1"/>
<dbReference type="EMBL" id="AE015927">
    <property type="protein sequence ID" value="AAO36336.1"/>
    <property type="molecule type" value="Genomic_DNA"/>
</dbReference>
<dbReference type="RefSeq" id="WP_011099996.1">
    <property type="nucleotide sequence ID" value="NC_004557.1"/>
</dbReference>
<dbReference type="SMR" id="Q893K6"/>
<dbReference type="STRING" id="212717.CTC_01812"/>
<dbReference type="GeneID" id="24254363"/>
<dbReference type="KEGG" id="ctc:CTC_01812"/>
<dbReference type="HOGENOM" id="CLU_039478_2_0_9"/>
<dbReference type="OrthoDB" id="9788689at2"/>
<dbReference type="UniPathway" id="UPA00379">
    <property type="reaction ID" value="UER00552"/>
</dbReference>
<dbReference type="Proteomes" id="UP000001412">
    <property type="component" value="Chromosome"/>
</dbReference>
<dbReference type="GO" id="GO:0008783">
    <property type="term" value="F:agmatinase activity"/>
    <property type="evidence" value="ECO:0007669"/>
    <property type="project" value="TreeGrafter"/>
</dbReference>
<dbReference type="GO" id="GO:0050415">
    <property type="term" value="F:formimidoylglutamase activity"/>
    <property type="evidence" value="ECO:0007669"/>
    <property type="project" value="UniProtKB-UniRule"/>
</dbReference>
<dbReference type="GO" id="GO:0030145">
    <property type="term" value="F:manganese ion binding"/>
    <property type="evidence" value="ECO:0007669"/>
    <property type="project" value="UniProtKB-UniRule"/>
</dbReference>
<dbReference type="GO" id="GO:0019556">
    <property type="term" value="P:L-histidine catabolic process to glutamate and formamide"/>
    <property type="evidence" value="ECO:0007669"/>
    <property type="project" value="UniProtKB-UniPathway"/>
</dbReference>
<dbReference type="GO" id="GO:0019557">
    <property type="term" value="P:L-histidine catabolic process to glutamate and formate"/>
    <property type="evidence" value="ECO:0007669"/>
    <property type="project" value="UniProtKB-UniPathway"/>
</dbReference>
<dbReference type="GO" id="GO:0033389">
    <property type="term" value="P:putrescine biosynthetic process from arginine, via agmatine"/>
    <property type="evidence" value="ECO:0007669"/>
    <property type="project" value="TreeGrafter"/>
</dbReference>
<dbReference type="CDD" id="cd09988">
    <property type="entry name" value="Formimidoylglutamase"/>
    <property type="match status" value="1"/>
</dbReference>
<dbReference type="Gene3D" id="3.40.800.10">
    <property type="entry name" value="Ureohydrolase domain"/>
    <property type="match status" value="1"/>
</dbReference>
<dbReference type="HAMAP" id="MF_00737">
    <property type="entry name" value="Formimidoylglutam"/>
    <property type="match status" value="1"/>
</dbReference>
<dbReference type="InterPro" id="IPR005923">
    <property type="entry name" value="HutG"/>
</dbReference>
<dbReference type="InterPro" id="IPR006035">
    <property type="entry name" value="Ureohydrolase"/>
</dbReference>
<dbReference type="InterPro" id="IPR023696">
    <property type="entry name" value="Ureohydrolase_dom_sf"/>
</dbReference>
<dbReference type="NCBIfam" id="TIGR01227">
    <property type="entry name" value="hutG"/>
    <property type="match status" value="1"/>
</dbReference>
<dbReference type="PANTHER" id="PTHR11358">
    <property type="entry name" value="ARGINASE/AGMATINASE"/>
    <property type="match status" value="1"/>
</dbReference>
<dbReference type="PANTHER" id="PTHR11358:SF35">
    <property type="entry name" value="FORMIMIDOYLGLUTAMASE"/>
    <property type="match status" value="1"/>
</dbReference>
<dbReference type="Pfam" id="PF00491">
    <property type="entry name" value="Arginase"/>
    <property type="match status" value="1"/>
</dbReference>
<dbReference type="PIRSF" id="PIRSF036979">
    <property type="entry name" value="Arginase"/>
    <property type="match status" value="1"/>
</dbReference>
<dbReference type="SUPFAM" id="SSF52768">
    <property type="entry name" value="Arginase/deacetylase"/>
    <property type="match status" value="1"/>
</dbReference>
<dbReference type="PROSITE" id="PS51409">
    <property type="entry name" value="ARGINASE_2"/>
    <property type="match status" value="1"/>
</dbReference>
<proteinExistence type="inferred from homology"/>